<feature type="chain" id="PRO_1000096189" description="Elongation factor P">
    <location>
        <begin position="1"/>
        <end position="186"/>
    </location>
</feature>
<name>EFP_PROM4</name>
<protein>
    <recommendedName>
        <fullName evidence="1">Elongation factor P</fullName>
        <shortName evidence="1">EF-P</shortName>
    </recommendedName>
</protein>
<comment type="function">
    <text evidence="1">Involved in peptide bond synthesis. Stimulates efficient translation and peptide-bond synthesis on native or reconstituted 70S ribosomes in vitro. Probably functions indirectly by altering the affinity of the ribosome for aminoacyl-tRNA, thus increasing their reactivity as acceptors for peptidyl transferase.</text>
</comment>
<comment type="pathway">
    <text evidence="1">Protein biosynthesis; polypeptide chain elongation.</text>
</comment>
<comment type="subcellular location">
    <subcellularLocation>
        <location evidence="1">Cytoplasm</location>
    </subcellularLocation>
</comment>
<comment type="similarity">
    <text evidence="1">Belongs to the elongation factor P family.</text>
</comment>
<reference key="1">
    <citation type="journal article" date="2007" name="PLoS Genet.">
        <title>Patterns and implications of gene gain and loss in the evolution of Prochlorococcus.</title>
        <authorList>
            <person name="Kettler G.C."/>
            <person name="Martiny A.C."/>
            <person name="Huang K."/>
            <person name="Zucker J."/>
            <person name="Coleman M.L."/>
            <person name="Rodrigue S."/>
            <person name="Chen F."/>
            <person name="Lapidus A."/>
            <person name="Ferriera S."/>
            <person name="Johnson J."/>
            <person name="Steglich C."/>
            <person name="Church G.M."/>
            <person name="Richardson P."/>
            <person name="Chisholm S.W."/>
        </authorList>
    </citation>
    <scope>NUCLEOTIDE SEQUENCE [LARGE SCALE GENOMIC DNA]</scope>
    <source>
        <strain>MIT 9211</strain>
    </source>
</reference>
<dbReference type="EMBL" id="CP000878">
    <property type="protein sequence ID" value="ABX07957.1"/>
    <property type="molecule type" value="Genomic_DNA"/>
</dbReference>
<dbReference type="RefSeq" id="WP_012194582.1">
    <property type="nucleotide sequence ID" value="NC_009976.1"/>
</dbReference>
<dbReference type="SMR" id="A9B9I2"/>
<dbReference type="STRING" id="93059.P9211_00261"/>
<dbReference type="KEGG" id="pmj:P9211_00261"/>
<dbReference type="eggNOG" id="COG0231">
    <property type="taxonomic scope" value="Bacteria"/>
</dbReference>
<dbReference type="HOGENOM" id="CLU_074944_0_1_3"/>
<dbReference type="OrthoDB" id="9801844at2"/>
<dbReference type="UniPathway" id="UPA00345"/>
<dbReference type="Proteomes" id="UP000000788">
    <property type="component" value="Chromosome"/>
</dbReference>
<dbReference type="GO" id="GO:0005737">
    <property type="term" value="C:cytoplasm"/>
    <property type="evidence" value="ECO:0007669"/>
    <property type="project" value="UniProtKB-SubCell"/>
</dbReference>
<dbReference type="GO" id="GO:0003746">
    <property type="term" value="F:translation elongation factor activity"/>
    <property type="evidence" value="ECO:0007669"/>
    <property type="project" value="UniProtKB-UniRule"/>
</dbReference>
<dbReference type="GO" id="GO:0043043">
    <property type="term" value="P:peptide biosynthetic process"/>
    <property type="evidence" value="ECO:0007669"/>
    <property type="project" value="InterPro"/>
</dbReference>
<dbReference type="CDD" id="cd04470">
    <property type="entry name" value="S1_EF-P_repeat_1"/>
    <property type="match status" value="1"/>
</dbReference>
<dbReference type="CDD" id="cd05794">
    <property type="entry name" value="S1_EF-P_repeat_2"/>
    <property type="match status" value="1"/>
</dbReference>
<dbReference type="FunFam" id="2.30.30.30:FF:000003">
    <property type="entry name" value="Elongation factor P"/>
    <property type="match status" value="1"/>
</dbReference>
<dbReference type="FunFam" id="2.40.50.140:FF:000004">
    <property type="entry name" value="Elongation factor P"/>
    <property type="match status" value="1"/>
</dbReference>
<dbReference type="FunFam" id="2.40.50.140:FF:000009">
    <property type="entry name" value="Elongation factor P"/>
    <property type="match status" value="1"/>
</dbReference>
<dbReference type="Gene3D" id="2.30.30.30">
    <property type="match status" value="1"/>
</dbReference>
<dbReference type="Gene3D" id="2.40.50.140">
    <property type="entry name" value="Nucleic acid-binding proteins"/>
    <property type="match status" value="2"/>
</dbReference>
<dbReference type="HAMAP" id="MF_00141">
    <property type="entry name" value="EF_P"/>
    <property type="match status" value="1"/>
</dbReference>
<dbReference type="InterPro" id="IPR015365">
    <property type="entry name" value="Elong-fact-P_C"/>
</dbReference>
<dbReference type="InterPro" id="IPR012340">
    <property type="entry name" value="NA-bd_OB-fold"/>
</dbReference>
<dbReference type="InterPro" id="IPR014722">
    <property type="entry name" value="Rib_uL2_dom2"/>
</dbReference>
<dbReference type="InterPro" id="IPR020599">
    <property type="entry name" value="Transl_elong_fac_P/YeiP"/>
</dbReference>
<dbReference type="InterPro" id="IPR013185">
    <property type="entry name" value="Transl_elong_KOW-like"/>
</dbReference>
<dbReference type="InterPro" id="IPR001059">
    <property type="entry name" value="Transl_elong_P/YeiP_cen"/>
</dbReference>
<dbReference type="InterPro" id="IPR013852">
    <property type="entry name" value="Transl_elong_P/YeiP_CS"/>
</dbReference>
<dbReference type="InterPro" id="IPR011768">
    <property type="entry name" value="Transl_elongation_fac_P"/>
</dbReference>
<dbReference type="InterPro" id="IPR008991">
    <property type="entry name" value="Translation_prot_SH3-like_sf"/>
</dbReference>
<dbReference type="NCBIfam" id="TIGR00038">
    <property type="entry name" value="efp"/>
    <property type="match status" value="1"/>
</dbReference>
<dbReference type="NCBIfam" id="NF001810">
    <property type="entry name" value="PRK00529.1"/>
    <property type="match status" value="1"/>
</dbReference>
<dbReference type="PANTHER" id="PTHR30053">
    <property type="entry name" value="ELONGATION FACTOR P"/>
    <property type="match status" value="1"/>
</dbReference>
<dbReference type="PANTHER" id="PTHR30053:SF12">
    <property type="entry name" value="ELONGATION FACTOR P (EF-P) FAMILY PROTEIN"/>
    <property type="match status" value="1"/>
</dbReference>
<dbReference type="Pfam" id="PF01132">
    <property type="entry name" value="EFP"/>
    <property type="match status" value="1"/>
</dbReference>
<dbReference type="Pfam" id="PF08207">
    <property type="entry name" value="EFP_N"/>
    <property type="match status" value="1"/>
</dbReference>
<dbReference type="Pfam" id="PF09285">
    <property type="entry name" value="Elong-fact-P_C"/>
    <property type="match status" value="1"/>
</dbReference>
<dbReference type="PIRSF" id="PIRSF005901">
    <property type="entry name" value="EF-P"/>
    <property type="match status" value="1"/>
</dbReference>
<dbReference type="SMART" id="SM01185">
    <property type="entry name" value="EFP"/>
    <property type="match status" value="1"/>
</dbReference>
<dbReference type="SMART" id="SM00841">
    <property type="entry name" value="Elong-fact-P_C"/>
    <property type="match status" value="1"/>
</dbReference>
<dbReference type="SUPFAM" id="SSF50249">
    <property type="entry name" value="Nucleic acid-binding proteins"/>
    <property type="match status" value="2"/>
</dbReference>
<dbReference type="SUPFAM" id="SSF50104">
    <property type="entry name" value="Translation proteins SH3-like domain"/>
    <property type="match status" value="1"/>
</dbReference>
<dbReference type="PROSITE" id="PS01275">
    <property type="entry name" value="EFP"/>
    <property type="match status" value="1"/>
</dbReference>
<proteinExistence type="inferred from homology"/>
<gene>
    <name evidence="1" type="primary">efp</name>
    <name type="ordered locus">P9211_00261</name>
</gene>
<organism>
    <name type="scientific">Prochlorococcus marinus (strain MIT 9211)</name>
    <dbReference type="NCBI Taxonomy" id="93059"/>
    <lineage>
        <taxon>Bacteria</taxon>
        <taxon>Bacillati</taxon>
        <taxon>Cyanobacteriota</taxon>
        <taxon>Cyanophyceae</taxon>
        <taxon>Synechococcales</taxon>
        <taxon>Prochlorococcaceae</taxon>
        <taxon>Prochlorococcus</taxon>
    </lineage>
</organism>
<sequence length="186" mass="20495">MISSNDFRTGTTIELDGAVWRVIEFLHVKPGKGSAFVRTKLKAVQSGSVVEKTFRAGEMVPQALLEKTTLQHTYMDSGDYVFMDMSSYEETRLTAAQIGESRKYLTEGMEVNVVSWNERPLEVELPNSVVLTVKETDPGVKGDTATGGTKPAILETGAQVMVPLFISVGEKIKVDTRNDSYLGREN</sequence>
<accession>A9B9I2</accession>
<keyword id="KW-0963">Cytoplasm</keyword>
<keyword id="KW-0251">Elongation factor</keyword>
<keyword id="KW-0648">Protein biosynthesis</keyword>
<keyword id="KW-1185">Reference proteome</keyword>
<evidence type="ECO:0000255" key="1">
    <source>
        <dbReference type="HAMAP-Rule" id="MF_00141"/>
    </source>
</evidence>